<feature type="chain" id="PRO_0000410325" description="Vacuolar ATPase assembly integral membrane protein VMA21">
    <location>
        <begin position="1"/>
        <end position="104"/>
    </location>
</feature>
<feature type="topological domain" description="Cytoplasmic" evidence="1">
    <location>
        <begin position="1"/>
        <end position="21"/>
    </location>
</feature>
<feature type="transmembrane region" description="Helical" evidence="1">
    <location>
        <begin position="22"/>
        <end position="42"/>
    </location>
</feature>
<feature type="topological domain" description="Lumenal" evidence="1">
    <location>
        <begin position="43"/>
        <end position="65"/>
    </location>
</feature>
<feature type="transmembrane region" description="Helical" evidence="1">
    <location>
        <begin position="66"/>
        <end position="86"/>
    </location>
</feature>
<feature type="topological domain" description="Cytoplasmic" evidence="1">
    <location>
        <begin position="87"/>
        <end position="104"/>
    </location>
</feature>
<feature type="short sequence motif" description="Prevents secretion from ER">
    <location>
        <begin position="101"/>
        <end position="104"/>
    </location>
</feature>
<dbReference type="EMBL" id="AAEY01000053">
    <property type="protein sequence ID" value="EAL17952.1"/>
    <property type="status" value="ALT_SEQ"/>
    <property type="molecule type" value="Genomic_DNA"/>
</dbReference>
<dbReference type="RefSeq" id="XP_772599.1">
    <property type="nucleotide sequence ID" value="XM_767506.1"/>
</dbReference>
<dbReference type="SMR" id="P0CS25"/>
<dbReference type="GeneID" id="4939003"/>
<dbReference type="KEGG" id="cnb:CNBK3030"/>
<dbReference type="HOGENOM" id="CLU_154717_0_0_1"/>
<dbReference type="OrthoDB" id="2619at5206"/>
<dbReference type="GO" id="GO:0005789">
    <property type="term" value="C:endoplasmic reticulum membrane"/>
    <property type="evidence" value="ECO:0007669"/>
    <property type="project" value="UniProtKB-SubCell"/>
</dbReference>
<dbReference type="GO" id="GO:0033116">
    <property type="term" value="C:endoplasmic reticulum-Golgi intermediate compartment membrane"/>
    <property type="evidence" value="ECO:0007669"/>
    <property type="project" value="UniProtKB-SubCell"/>
</dbReference>
<dbReference type="GO" id="GO:0012507">
    <property type="term" value="C:ER to Golgi transport vesicle membrane"/>
    <property type="evidence" value="ECO:0007669"/>
    <property type="project" value="UniProtKB-SubCell"/>
</dbReference>
<dbReference type="GO" id="GO:0070072">
    <property type="term" value="P:vacuolar proton-transporting V-type ATPase complex assembly"/>
    <property type="evidence" value="ECO:0007669"/>
    <property type="project" value="UniProtKB-UniRule"/>
</dbReference>
<dbReference type="HAMAP" id="MF_03058">
    <property type="entry name" value="VMA21"/>
    <property type="match status" value="1"/>
</dbReference>
<dbReference type="InterPro" id="IPR019013">
    <property type="entry name" value="Vma21"/>
</dbReference>
<dbReference type="PANTHER" id="PTHR31792">
    <property type="entry name" value="VACUOLAR ATPASE ASSEMBLY INTEGRAL MEMBRANE PROTEIN VMA21"/>
    <property type="match status" value="1"/>
</dbReference>
<dbReference type="PANTHER" id="PTHR31792:SF3">
    <property type="entry name" value="VACUOLAR ATPASE ASSEMBLY INTEGRAL MEMBRANE PROTEIN VMA21"/>
    <property type="match status" value="1"/>
</dbReference>
<dbReference type="Pfam" id="PF09446">
    <property type="entry name" value="VMA21"/>
    <property type="match status" value="1"/>
</dbReference>
<reference key="1">
    <citation type="journal article" date="2005" name="Science">
        <title>The genome of the basidiomycetous yeast and human pathogen Cryptococcus neoformans.</title>
        <authorList>
            <person name="Loftus B.J."/>
            <person name="Fung E."/>
            <person name="Roncaglia P."/>
            <person name="Rowley D."/>
            <person name="Amedeo P."/>
            <person name="Bruno D."/>
            <person name="Vamathevan J."/>
            <person name="Miranda M."/>
            <person name="Anderson I.J."/>
            <person name="Fraser J.A."/>
            <person name="Allen J.E."/>
            <person name="Bosdet I.E."/>
            <person name="Brent M.R."/>
            <person name="Chiu R."/>
            <person name="Doering T.L."/>
            <person name="Donlin M.J."/>
            <person name="D'Souza C.A."/>
            <person name="Fox D.S."/>
            <person name="Grinberg V."/>
            <person name="Fu J."/>
            <person name="Fukushima M."/>
            <person name="Haas B.J."/>
            <person name="Huang J.C."/>
            <person name="Janbon G."/>
            <person name="Jones S.J.M."/>
            <person name="Koo H.L."/>
            <person name="Krzywinski M.I."/>
            <person name="Kwon-Chung K.J."/>
            <person name="Lengeler K.B."/>
            <person name="Maiti R."/>
            <person name="Marra M.A."/>
            <person name="Marra R.E."/>
            <person name="Mathewson C.A."/>
            <person name="Mitchell T.G."/>
            <person name="Pertea M."/>
            <person name="Riggs F.R."/>
            <person name="Salzberg S.L."/>
            <person name="Schein J.E."/>
            <person name="Shvartsbeyn A."/>
            <person name="Shin H."/>
            <person name="Shumway M."/>
            <person name="Specht C.A."/>
            <person name="Suh B.B."/>
            <person name="Tenney A."/>
            <person name="Utterback T.R."/>
            <person name="Wickes B.L."/>
            <person name="Wortman J.R."/>
            <person name="Wye N.H."/>
            <person name="Kronstad J.W."/>
            <person name="Lodge J.K."/>
            <person name="Heitman J."/>
            <person name="Davis R.W."/>
            <person name="Fraser C.M."/>
            <person name="Hyman R.W."/>
        </authorList>
    </citation>
    <scope>NUCLEOTIDE SEQUENCE [LARGE SCALE GENOMIC DNA]</scope>
    <source>
        <strain>B-3501A</strain>
    </source>
</reference>
<sequence>MSNRVSTGKMAMAPQESVQPAVLYKLVLFALLMAVVPIGTYFSTLNYLWDGASRCGFPSGLCSTTFAAISAIAAANLILVGYVVVAFREDAASRTGPLPEKKTS</sequence>
<protein>
    <recommendedName>
        <fullName evidence="1">Vacuolar ATPase assembly integral membrane protein VMA21</fullName>
    </recommendedName>
</protein>
<comment type="function">
    <text evidence="1">Required for the assembly of the V0 complex of the vacuolar ATPase (V-ATPase) in the endoplasmic reticulum.</text>
</comment>
<comment type="subcellular location">
    <subcellularLocation>
        <location evidence="1">Endoplasmic reticulum membrane</location>
        <topology evidence="1">Multi-pass membrane protein</topology>
    </subcellularLocation>
    <subcellularLocation>
        <location evidence="1">Endoplasmic reticulum-Golgi intermediate compartment membrane</location>
        <topology evidence="1">Multi-pass membrane protein</topology>
    </subcellularLocation>
    <subcellularLocation>
        <location evidence="1">Cytoplasmic vesicle</location>
        <location evidence="1">COPII-coated vesicle membrane</location>
        <topology evidence="1">Multi-pass membrane protein</topology>
    </subcellularLocation>
</comment>
<comment type="similarity">
    <text evidence="1">Belongs to the VMA21 family.</text>
</comment>
<comment type="sequence caution" evidence="2">
    <conflict type="erroneous gene model prediction">
        <sequence resource="EMBL-CDS" id="EAL17952"/>
    </conflict>
</comment>
<organism>
    <name type="scientific">Cryptococcus neoformans var. neoformans serotype D (strain B-3501A)</name>
    <name type="common">Filobasidiella neoformans</name>
    <dbReference type="NCBI Taxonomy" id="283643"/>
    <lineage>
        <taxon>Eukaryota</taxon>
        <taxon>Fungi</taxon>
        <taxon>Dikarya</taxon>
        <taxon>Basidiomycota</taxon>
        <taxon>Agaricomycotina</taxon>
        <taxon>Tremellomycetes</taxon>
        <taxon>Tremellales</taxon>
        <taxon>Cryptococcaceae</taxon>
        <taxon>Cryptococcus</taxon>
        <taxon>Cryptococcus neoformans species complex</taxon>
    </lineage>
</organism>
<proteinExistence type="inferred from homology"/>
<name>VMA21_CRYNB</name>
<accession>P0CS25</accession>
<accession>Q55JN0</accession>
<accession>Q5K9X1</accession>
<gene>
    <name evidence="1" type="primary">VMA21</name>
    <name type="ordered locus">CNBK3030</name>
</gene>
<evidence type="ECO:0000255" key="1">
    <source>
        <dbReference type="HAMAP-Rule" id="MF_03058"/>
    </source>
</evidence>
<evidence type="ECO:0000305" key="2"/>
<keyword id="KW-0968">Cytoplasmic vesicle</keyword>
<keyword id="KW-0256">Endoplasmic reticulum</keyword>
<keyword id="KW-0472">Membrane</keyword>
<keyword id="KW-0812">Transmembrane</keyword>
<keyword id="KW-1133">Transmembrane helix</keyword>